<reference key="1">
    <citation type="journal article" date="2008" name="DNA Res.">
        <title>Complete genome sequence of Finegoldia magna, an anaerobic opportunistic pathogen.</title>
        <authorList>
            <person name="Goto T."/>
            <person name="Yamashita A."/>
            <person name="Hirakawa H."/>
            <person name="Matsutani M."/>
            <person name="Todo K."/>
            <person name="Ohshima K."/>
            <person name="Toh H."/>
            <person name="Miyamoto K."/>
            <person name="Kuhara S."/>
            <person name="Hattori M."/>
            <person name="Shimizu T."/>
            <person name="Akimoto S."/>
        </authorList>
    </citation>
    <scope>NUCLEOTIDE SEQUENCE [LARGE SCALE GENOMIC DNA]</scope>
    <source>
        <strain>ATCC 29328 / DSM 20472 / WAL 2508</strain>
    </source>
</reference>
<sequence>MAVPKRKTSKTRRDKRRASSYKLPRVTITTCPNCGSPKLPHRVCKECGHYDGKQVVDNSEQN</sequence>
<comment type="similarity">
    <text evidence="1">Belongs to the bacterial ribosomal protein bL32 family.</text>
</comment>
<feature type="chain" id="PRO_1000120127" description="Large ribosomal subunit protein bL32">
    <location>
        <begin position="1"/>
        <end position="62"/>
    </location>
</feature>
<feature type="region of interest" description="Disordered" evidence="2">
    <location>
        <begin position="1"/>
        <end position="20"/>
    </location>
</feature>
<feature type="compositionally biased region" description="Basic residues" evidence="2">
    <location>
        <begin position="1"/>
        <end position="19"/>
    </location>
</feature>
<keyword id="KW-1185">Reference proteome</keyword>
<keyword id="KW-0687">Ribonucleoprotein</keyword>
<keyword id="KW-0689">Ribosomal protein</keyword>
<gene>
    <name evidence="1" type="primary">rpmF</name>
    <name type="ordered locus">FMG_0851</name>
</gene>
<dbReference type="EMBL" id="AP008971">
    <property type="protein sequence ID" value="BAG08269.1"/>
    <property type="molecule type" value="Genomic_DNA"/>
</dbReference>
<dbReference type="RefSeq" id="WP_002837903.1">
    <property type="nucleotide sequence ID" value="NC_010376.1"/>
</dbReference>
<dbReference type="SMR" id="B0S1M9"/>
<dbReference type="STRING" id="334413.FMG_0851"/>
<dbReference type="KEGG" id="fma:FMG_0851"/>
<dbReference type="eggNOG" id="COG0333">
    <property type="taxonomic scope" value="Bacteria"/>
</dbReference>
<dbReference type="HOGENOM" id="CLU_129084_1_3_9"/>
<dbReference type="Proteomes" id="UP000001319">
    <property type="component" value="Chromosome"/>
</dbReference>
<dbReference type="GO" id="GO:0015934">
    <property type="term" value="C:large ribosomal subunit"/>
    <property type="evidence" value="ECO:0007669"/>
    <property type="project" value="InterPro"/>
</dbReference>
<dbReference type="GO" id="GO:0003735">
    <property type="term" value="F:structural constituent of ribosome"/>
    <property type="evidence" value="ECO:0007669"/>
    <property type="project" value="InterPro"/>
</dbReference>
<dbReference type="GO" id="GO:0006412">
    <property type="term" value="P:translation"/>
    <property type="evidence" value="ECO:0007669"/>
    <property type="project" value="UniProtKB-UniRule"/>
</dbReference>
<dbReference type="Gene3D" id="1.20.5.640">
    <property type="entry name" value="Single helix bin"/>
    <property type="match status" value="1"/>
</dbReference>
<dbReference type="HAMAP" id="MF_00340">
    <property type="entry name" value="Ribosomal_bL32"/>
    <property type="match status" value="1"/>
</dbReference>
<dbReference type="InterPro" id="IPR002677">
    <property type="entry name" value="Ribosomal_bL32"/>
</dbReference>
<dbReference type="InterPro" id="IPR044957">
    <property type="entry name" value="Ribosomal_bL32_bact"/>
</dbReference>
<dbReference type="InterPro" id="IPR011332">
    <property type="entry name" value="Ribosomal_zn-bd"/>
</dbReference>
<dbReference type="NCBIfam" id="TIGR01031">
    <property type="entry name" value="rpmF_bact"/>
    <property type="match status" value="1"/>
</dbReference>
<dbReference type="PANTHER" id="PTHR35534">
    <property type="entry name" value="50S RIBOSOMAL PROTEIN L32"/>
    <property type="match status" value="1"/>
</dbReference>
<dbReference type="PANTHER" id="PTHR35534:SF1">
    <property type="entry name" value="LARGE RIBOSOMAL SUBUNIT PROTEIN BL32"/>
    <property type="match status" value="1"/>
</dbReference>
<dbReference type="Pfam" id="PF01783">
    <property type="entry name" value="Ribosomal_L32p"/>
    <property type="match status" value="1"/>
</dbReference>
<dbReference type="SUPFAM" id="SSF57829">
    <property type="entry name" value="Zn-binding ribosomal proteins"/>
    <property type="match status" value="1"/>
</dbReference>
<proteinExistence type="inferred from homology"/>
<organism>
    <name type="scientific">Finegoldia magna (strain ATCC 29328 / DSM 20472 / WAL 2508)</name>
    <name type="common">Peptostreptococcus magnus</name>
    <dbReference type="NCBI Taxonomy" id="334413"/>
    <lineage>
        <taxon>Bacteria</taxon>
        <taxon>Bacillati</taxon>
        <taxon>Bacillota</taxon>
        <taxon>Tissierellia</taxon>
        <taxon>Tissierellales</taxon>
        <taxon>Peptoniphilaceae</taxon>
        <taxon>Finegoldia</taxon>
    </lineage>
</organism>
<accession>B0S1M9</accession>
<name>RL32_FINM2</name>
<evidence type="ECO:0000255" key="1">
    <source>
        <dbReference type="HAMAP-Rule" id="MF_00340"/>
    </source>
</evidence>
<evidence type="ECO:0000256" key="2">
    <source>
        <dbReference type="SAM" id="MobiDB-lite"/>
    </source>
</evidence>
<evidence type="ECO:0000305" key="3"/>
<protein>
    <recommendedName>
        <fullName evidence="1">Large ribosomal subunit protein bL32</fullName>
    </recommendedName>
    <alternativeName>
        <fullName evidence="3">50S ribosomal protein L32</fullName>
    </alternativeName>
</protein>